<feature type="chain" id="PRO_1000193074" description="Dihydroorotase">
    <location>
        <begin position="1"/>
        <end position="348"/>
    </location>
</feature>
<feature type="active site" evidence="1">
    <location>
        <position position="251"/>
    </location>
</feature>
<feature type="binding site" evidence="1">
    <location>
        <position position="17"/>
    </location>
    <ligand>
        <name>Zn(2+)</name>
        <dbReference type="ChEBI" id="CHEBI:29105"/>
        <label>1</label>
    </ligand>
</feature>
<feature type="binding site" evidence="1">
    <location>
        <begin position="19"/>
        <end position="21"/>
    </location>
    <ligand>
        <name>substrate</name>
    </ligand>
</feature>
<feature type="binding site" evidence="1">
    <location>
        <position position="19"/>
    </location>
    <ligand>
        <name>Zn(2+)</name>
        <dbReference type="ChEBI" id="CHEBI:29105"/>
        <label>1</label>
    </ligand>
</feature>
<feature type="binding site" evidence="1">
    <location>
        <position position="45"/>
    </location>
    <ligand>
        <name>substrate</name>
    </ligand>
</feature>
<feature type="binding site" description="via carbamate group" evidence="1">
    <location>
        <position position="103"/>
    </location>
    <ligand>
        <name>Zn(2+)</name>
        <dbReference type="ChEBI" id="CHEBI:29105"/>
        <label>1</label>
    </ligand>
</feature>
<feature type="binding site" description="via carbamate group" evidence="1">
    <location>
        <position position="103"/>
    </location>
    <ligand>
        <name>Zn(2+)</name>
        <dbReference type="ChEBI" id="CHEBI:29105"/>
        <label>2</label>
    </ligand>
</feature>
<feature type="binding site" evidence="1">
    <location>
        <position position="140"/>
    </location>
    <ligand>
        <name>substrate</name>
    </ligand>
</feature>
<feature type="binding site" evidence="1">
    <location>
        <position position="140"/>
    </location>
    <ligand>
        <name>Zn(2+)</name>
        <dbReference type="ChEBI" id="CHEBI:29105"/>
        <label>2</label>
    </ligand>
</feature>
<feature type="binding site" evidence="1">
    <location>
        <position position="178"/>
    </location>
    <ligand>
        <name>Zn(2+)</name>
        <dbReference type="ChEBI" id="CHEBI:29105"/>
        <label>2</label>
    </ligand>
</feature>
<feature type="binding site" evidence="1">
    <location>
        <position position="223"/>
    </location>
    <ligand>
        <name>substrate</name>
    </ligand>
</feature>
<feature type="binding site" evidence="1">
    <location>
        <position position="251"/>
    </location>
    <ligand>
        <name>Zn(2+)</name>
        <dbReference type="ChEBI" id="CHEBI:29105"/>
        <label>1</label>
    </ligand>
</feature>
<feature type="binding site" evidence="1">
    <location>
        <position position="255"/>
    </location>
    <ligand>
        <name>substrate</name>
    </ligand>
</feature>
<feature type="binding site" evidence="1">
    <location>
        <position position="267"/>
    </location>
    <ligand>
        <name>substrate</name>
    </ligand>
</feature>
<feature type="modified residue" description="N6-carboxylysine" evidence="1">
    <location>
        <position position="103"/>
    </location>
</feature>
<name>PYRC_ECO7I</name>
<organism>
    <name type="scientific">Escherichia coli O7:K1 (strain IAI39 / ExPEC)</name>
    <dbReference type="NCBI Taxonomy" id="585057"/>
    <lineage>
        <taxon>Bacteria</taxon>
        <taxon>Pseudomonadati</taxon>
        <taxon>Pseudomonadota</taxon>
        <taxon>Gammaproteobacteria</taxon>
        <taxon>Enterobacterales</taxon>
        <taxon>Enterobacteriaceae</taxon>
        <taxon>Escherichia</taxon>
    </lineage>
</organism>
<reference key="1">
    <citation type="journal article" date="2009" name="PLoS Genet.">
        <title>Organised genome dynamics in the Escherichia coli species results in highly diverse adaptive paths.</title>
        <authorList>
            <person name="Touchon M."/>
            <person name="Hoede C."/>
            <person name="Tenaillon O."/>
            <person name="Barbe V."/>
            <person name="Baeriswyl S."/>
            <person name="Bidet P."/>
            <person name="Bingen E."/>
            <person name="Bonacorsi S."/>
            <person name="Bouchier C."/>
            <person name="Bouvet O."/>
            <person name="Calteau A."/>
            <person name="Chiapello H."/>
            <person name="Clermont O."/>
            <person name="Cruveiller S."/>
            <person name="Danchin A."/>
            <person name="Diard M."/>
            <person name="Dossat C."/>
            <person name="Karoui M.E."/>
            <person name="Frapy E."/>
            <person name="Garry L."/>
            <person name="Ghigo J.M."/>
            <person name="Gilles A.M."/>
            <person name="Johnson J."/>
            <person name="Le Bouguenec C."/>
            <person name="Lescat M."/>
            <person name="Mangenot S."/>
            <person name="Martinez-Jehanne V."/>
            <person name="Matic I."/>
            <person name="Nassif X."/>
            <person name="Oztas S."/>
            <person name="Petit M.A."/>
            <person name="Pichon C."/>
            <person name="Rouy Z."/>
            <person name="Ruf C.S."/>
            <person name="Schneider D."/>
            <person name="Tourret J."/>
            <person name="Vacherie B."/>
            <person name="Vallenet D."/>
            <person name="Medigue C."/>
            <person name="Rocha E.P.C."/>
            <person name="Denamur E."/>
        </authorList>
    </citation>
    <scope>NUCLEOTIDE SEQUENCE [LARGE SCALE GENOMIC DNA]</scope>
    <source>
        <strain>IAI39 / ExPEC</strain>
    </source>
</reference>
<keyword id="KW-0378">Hydrolase</keyword>
<keyword id="KW-0479">Metal-binding</keyword>
<keyword id="KW-0665">Pyrimidine biosynthesis</keyword>
<keyword id="KW-0862">Zinc</keyword>
<comment type="function">
    <text evidence="1">Catalyzes the reversible cyclization of carbamoyl aspartate to dihydroorotate.</text>
</comment>
<comment type="catalytic activity">
    <reaction evidence="1">
        <text>(S)-dihydroorotate + H2O = N-carbamoyl-L-aspartate + H(+)</text>
        <dbReference type="Rhea" id="RHEA:24296"/>
        <dbReference type="ChEBI" id="CHEBI:15377"/>
        <dbReference type="ChEBI" id="CHEBI:15378"/>
        <dbReference type="ChEBI" id="CHEBI:30864"/>
        <dbReference type="ChEBI" id="CHEBI:32814"/>
        <dbReference type="EC" id="3.5.2.3"/>
    </reaction>
</comment>
<comment type="cofactor">
    <cofactor evidence="1">
        <name>Zn(2+)</name>
        <dbReference type="ChEBI" id="CHEBI:29105"/>
    </cofactor>
    <text evidence="1">Binds 2 Zn(2+) ions per subunit.</text>
</comment>
<comment type="pathway">
    <text evidence="1">Pyrimidine metabolism; UMP biosynthesis via de novo pathway; (S)-dihydroorotate from bicarbonate: step 3/3.</text>
</comment>
<comment type="subunit">
    <text evidence="1">Homodimer.</text>
</comment>
<comment type="similarity">
    <text evidence="1">Belongs to the metallo-dependent hydrolases superfamily. DHOase family. Class II DHOase subfamily.</text>
</comment>
<gene>
    <name evidence="1" type="primary">pyrC</name>
    <name type="ordered locus">ECIAI39_2101</name>
</gene>
<evidence type="ECO:0000255" key="1">
    <source>
        <dbReference type="HAMAP-Rule" id="MF_00219"/>
    </source>
</evidence>
<accession>B7NL72</accession>
<proteinExistence type="inferred from homology"/>
<sequence>MTAPSQVLKIRRPDDWHLHLRDGDMLKTVVPYTSEIYGRAIVMPNLAPPVTTVEAAVAYRQRILDTVPAGHDFTPLMTCYLTDSLDPNELERGFNEGVFTAAKLYPANATTNSSHGVTSVDAIMPVLERMEKIGMPLLVHGEVTHADIDIFDREARFIESVMEPLRQRLTALKVVFEHITTKDAADYVRDGNERLAATITPQHLMFNRNHMLVGGVRPHLYCLPILKRNIHQQALRELVASGFNRVFLGTDSAPHARHRKESSCGCAGCFNAPTALGSYATVFEEMNALQHFEAFCSVNGPQFYGLPVNDTFIELVREEQQVAESIALTDDTLVPFLAGETVRWSVKQ</sequence>
<protein>
    <recommendedName>
        <fullName evidence="1">Dihydroorotase</fullName>
        <shortName evidence="1">DHOase</shortName>
        <ecNumber evidence="1">3.5.2.3</ecNumber>
    </recommendedName>
</protein>
<dbReference type="EC" id="3.5.2.3" evidence="1"/>
<dbReference type="EMBL" id="CU928164">
    <property type="protein sequence ID" value="CAR18228.1"/>
    <property type="molecule type" value="Genomic_DNA"/>
</dbReference>
<dbReference type="RefSeq" id="WP_000126561.1">
    <property type="nucleotide sequence ID" value="NC_011750.1"/>
</dbReference>
<dbReference type="RefSeq" id="YP_002408064.1">
    <property type="nucleotide sequence ID" value="NC_011750.1"/>
</dbReference>
<dbReference type="SMR" id="B7NL72"/>
<dbReference type="STRING" id="585057.ECIAI39_2101"/>
<dbReference type="MEROPS" id="M38.A02"/>
<dbReference type="KEGG" id="ect:ECIAI39_2101"/>
<dbReference type="PATRIC" id="fig|585057.6.peg.2183"/>
<dbReference type="HOGENOM" id="CLU_041558_1_0_6"/>
<dbReference type="UniPathway" id="UPA00070">
    <property type="reaction ID" value="UER00117"/>
</dbReference>
<dbReference type="Proteomes" id="UP000000749">
    <property type="component" value="Chromosome"/>
</dbReference>
<dbReference type="GO" id="GO:0005829">
    <property type="term" value="C:cytosol"/>
    <property type="evidence" value="ECO:0007669"/>
    <property type="project" value="TreeGrafter"/>
</dbReference>
<dbReference type="GO" id="GO:0004151">
    <property type="term" value="F:dihydroorotase activity"/>
    <property type="evidence" value="ECO:0007669"/>
    <property type="project" value="UniProtKB-UniRule"/>
</dbReference>
<dbReference type="GO" id="GO:0008270">
    <property type="term" value="F:zinc ion binding"/>
    <property type="evidence" value="ECO:0007669"/>
    <property type="project" value="UniProtKB-UniRule"/>
</dbReference>
<dbReference type="GO" id="GO:0006207">
    <property type="term" value="P:'de novo' pyrimidine nucleobase biosynthetic process"/>
    <property type="evidence" value="ECO:0007669"/>
    <property type="project" value="TreeGrafter"/>
</dbReference>
<dbReference type="GO" id="GO:0044205">
    <property type="term" value="P:'de novo' UMP biosynthetic process"/>
    <property type="evidence" value="ECO:0007669"/>
    <property type="project" value="UniProtKB-UniRule"/>
</dbReference>
<dbReference type="CDD" id="cd01294">
    <property type="entry name" value="DHOase"/>
    <property type="match status" value="1"/>
</dbReference>
<dbReference type="FunFam" id="3.20.20.140:FF:000006">
    <property type="entry name" value="Dihydroorotase"/>
    <property type="match status" value="1"/>
</dbReference>
<dbReference type="Gene3D" id="3.20.20.140">
    <property type="entry name" value="Metal-dependent hydrolases"/>
    <property type="match status" value="1"/>
</dbReference>
<dbReference type="HAMAP" id="MF_00219">
    <property type="entry name" value="PyrC_classII"/>
    <property type="match status" value="1"/>
</dbReference>
<dbReference type="InterPro" id="IPR006680">
    <property type="entry name" value="Amidohydro-rel"/>
</dbReference>
<dbReference type="InterPro" id="IPR004721">
    <property type="entry name" value="DHOdimr"/>
</dbReference>
<dbReference type="InterPro" id="IPR002195">
    <property type="entry name" value="Dihydroorotase_CS"/>
</dbReference>
<dbReference type="InterPro" id="IPR032466">
    <property type="entry name" value="Metal_Hydrolase"/>
</dbReference>
<dbReference type="NCBIfam" id="TIGR00856">
    <property type="entry name" value="pyrC_dimer"/>
    <property type="match status" value="1"/>
</dbReference>
<dbReference type="PANTHER" id="PTHR43137">
    <property type="entry name" value="DIHYDROOROTASE"/>
    <property type="match status" value="1"/>
</dbReference>
<dbReference type="PANTHER" id="PTHR43137:SF1">
    <property type="entry name" value="DIHYDROOROTASE"/>
    <property type="match status" value="1"/>
</dbReference>
<dbReference type="Pfam" id="PF01979">
    <property type="entry name" value="Amidohydro_1"/>
    <property type="match status" value="1"/>
</dbReference>
<dbReference type="PIRSF" id="PIRSF001237">
    <property type="entry name" value="DHOdimr"/>
    <property type="match status" value="1"/>
</dbReference>
<dbReference type="SUPFAM" id="SSF51556">
    <property type="entry name" value="Metallo-dependent hydrolases"/>
    <property type="match status" value="1"/>
</dbReference>
<dbReference type="PROSITE" id="PS00482">
    <property type="entry name" value="DIHYDROOROTASE_1"/>
    <property type="match status" value="1"/>
</dbReference>
<dbReference type="PROSITE" id="PS00483">
    <property type="entry name" value="DIHYDROOROTASE_2"/>
    <property type="match status" value="1"/>
</dbReference>